<evidence type="ECO:0000255" key="1">
    <source>
        <dbReference type="HAMAP-Rule" id="MF_01533"/>
    </source>
</evidence>
<dbReference type="EMBL" id="BX936398">
    <property type="protein sequence ID" value="CAH19627.1"/>
    <property type="molecule type" value="Genomic_DNA"/>
</dbReference>
<dbReference type="RefSeq" id="WP_011191603.1">
    <property type="nucleotide sequence ID" value="NC_006155.1"/>
</dbReference>
<dbReference type="SMR" id="Q66FF1"/>
<dbReference type="KEGG" id="ypo:BZ17_2181"/>
<dbReference type="KEGG" id="yps:YPTB0387"/>
<dbReference type="PATRIC" id="fig|273123.14.peg.2308"/>
<dbReference type="Proteomes" id="UP000001011">
    <property type="component" value="Chromosome"/>
</dbReference>
<dbReference type="GO" id="GO:0005737">
    <property type="term" value="C:cytoplasm"/>
    <property type="evidence" value="ECO:0007669"/>
    <property type="project" value="UniProtKB-SubCell"/>
</dbReference>
<dbReference type="GO" id="GO:0003700">
    <property type="term" value="F:DNA-binding transcription factor activity"/>
    <property type="evidence" value="ECO:0007669"/>
    <property type="project" value="UniProtKB-UniRule"/>
</dbReference>
<dbReference type="GO" id="GO:0043565">
    <property type="term" value="F:sequence-specific DNA binding"/>
    <property type="evidence" value="ECO:0007669"/>
    <property type="project" value="InterPro"/>
</dbReference>
<dbReference type="GO" id="GO:0045893">
    <property type="term" value="P:positive regulation of DNA-templated transcription"/>
    <property type="evidence" value="ECO:0007669"/>
    <property type="project" value="UniProtKB-UniRule"/>
</dbReference>
<dbReference type="GO" id="GO:0019299">
    <property type="term" value="P:rhamnose metabolic process"/>
    <property type="evidence" value="ECO:0007669"/>
    <property type="project" value="UniProtKB-UniRule"/>
</dbReference>
<dbReference type="CDD" id="cd06977">
    <property type="entry name" value="cupin_RhaR_RhaS-like_N"/>
    <property type="match status" value="1"/>
</dbReference>
<dbReference type="Gene3D" id="1.10.10.60">
    <property type="entry name" value="Homeodomain-like"/>
    <property type="match status" value="1"/>
</dbReference>
<dbReference type="Gene3D" id="2.60.120.10">
    <property type="entry name" value="Jelly Rolls"/>
    <property type="match status" value="1"/>
</dbReference>
<dbReference type="HAMAP" id="MF_01533">
    <property type="entry name" value="HTH_type_RhaR"/>
    <property type="match status" value="1"/>
</dbReference>
<dbReference type="InterPro" id="IPR003313">
    <property type="entry name" value="AraC-bd"/>
</dbReference>
<dbReference type="InterPro" id="IPR009057">
    <property type="entry name" value="Homeodomain-like_sf"/>
</dbReference>
<dbReference type="InterPro" id="IPR018060">
    <property type="entry name" value="HTH_AraC"/>
</dbReference>
<dbReference type="InterPro" id="IPR018062">
    <property type="entry name" value="HTH_AraC-typ_CS"/>
</dbReference>
<dbReference type="InterPro" id="IPR047220">
    <property type="entry name" value="RhaR_RhaS-like_N"/>
</dbReference>
<dbReference type="InterPro" id="IPR014710">
    <property type="entry name" value="RmlC-like_jellyroll"/>
</dbReference>
<dbReference type="InterPro" id="IPR011051">
    <property type="entry name" value="RmlC_Cupin_sf"/>
</dbReference>
<dbReference type="InterPro" id="IPR023699">
    <property type="entry name" value="Tscrpt_act_RhaR"/>
</dbReference>
<dbReference type="InterPro" id="IPR020449">
    <property type="entry name" value="Tscrpt_reg_AraC-type_HTH"/>
</dbReference>
<dbReference type="NCBIfam" id="NF010026">
    <property type="entry name" value="PRK13501.1"/>
    <property type="match status" value="1"/>
</dbReference>
<dbReference type="PANTHER" id="PTHR43280">
    <property type="entry name" value="ARAC-FAMILY TRANSCRIPTIONAL REGULATOR"/>
    <property type="match status" value="1"/>
</dbReference>
<dbReference type="PANTHER" id="PTHR43280:SF13">
    <property type="entry name" value="HTH-TYPE TRANSCRIPTIONAL ACTIVATOR RHAR"/>
    <property type="match status" value="1"/>
</dbReference>
<dbReference type="Pfam" id="PF02311">
    <property type="entry name" value="AraC_binding"/>
    <property type="match status" value="1"/>
</dbReference>
<dbReference type="Pfam" id="PF12833">
    <property type="entry name" value="HTH_18"/>
    <property type="match status" value="1"/>
</dbReference>
<dbReference type="PRINTS" id="PR00032">
    <property type="entry name" value="HTHARAC"/>
</dbReference>
<dbReference type="SMART" id="SM00342">
    <property type="entry name" value="HTH_ARAC"/>
    <property type="match status" value="1"/>
</dbReference>
<dbReference type="SUPFAM" id="SSF46689">
    <property type="entry name" value="Homeodomain-like"/>
    <property type="match status" value="1"/>
</dbReference>
<dbReference type="SUPFAM" id="SSF51182">
    <property type="entry name" value="RmlC-like cupins"/>
    <property type="match status" value="1"/>
</dbReference>
<dbReference type="PROSITE" id="PS00041">
    <property type="entry name" value="HTH_ARAC_FAMILY_1"/>
    <property type="match status" value="1"/>
</dbReference>
<dbReference type="PROSITE" id="PS01124">
    <property type="entry name" value="HTH_ARAC_FAMILY_2"/>
    <property type="match status" value="1"/>
</dbReference>
<keyword id="KW-0010">Activator</keyword>
<keyword id="KW-0963">Cytoplasm</keyword>
<keyword id="KW-0238">DNA-binding</keyword>
<keyword id="KW-0677">Repeat</keyword>
<keyword id="KW-0684">Rhamnose metabolism</keyword>
<keyword id="KW-0804">Transcription</keyword>
<keyword id="KW-0805">Transcription regulation</keyword>
<sequence>MRAPLLLESRDYLLSEQMPVAVTNRYPQETFVEHTHQFCEIVIVWRGNGLHVLNDHPYRITCGDVFYIQAADHHSYESVHDLVLDNIIYCPERLHLNAQWHKLLPPLGPEQNQGYWRLTTQGMAQARPIIQQLAQESRKTDSWSIQLTEVLLLQLAIVLKRHRYRAEHAHLLPDGEQLDLIMSALQQSLGAYFDMADFCHKNQLVERSLKQLFRQQTGMSISHYLRQIRLCHAKCLLRGSEHRISDIAARCGFEDSNYFSAVFTREAGMTPRDYRQRFIRSPVLPAKNEP</sequence>
<reference key="1">
    <citation type="journal article" date="2004" name="Proc. Natl. Acad. Sci. U.S.A.">
        <title>Insights into the evolution of Yersinia pestis through whole-genome comparison with Yersinia pseudotuberculosis.</title>
        <authorList>
            <person name="Chain P.S.G."/>
            <person name="Carniel E."/>
            <person name="Larimer F.W."/>
            <person name="Lamerdin J."/>
            <person name="Stoutland P.O."/>
            <person name="Regala W.M."/>
            <person name="Georgescu A.M."/>
            <person name="Vergez L.M."/>
            <person name="Land M.L."/>
            <person name="Motin V.L."/>
            <person name="Brubaker R.R."/>
            <person name="Fowler J."/>
            <person name="Hinnebusch J."/>
            <person name="Marceau M."/>
            <person name="Medigue C."/>
            <person name="Simonet M."/>
            <person name="Chenal-Francisque V."/>
            <person name="Souza B."/>
            <person name="Dacheux D."/>
            <person name="Elliott J.M."/>
            <person name="Derbise A."/>
            <person name="Hauser L.J."/>
            <person name="Garcia E."/>
        </authorList>
    </citation>
    <scope>NUCLEOTIDE SEQUENCE [LARGE SCALE GENOMIC DNA]</scope>
    <source>
        <strain>IP32953</strain>
    </source>
</reference>
<protein>
    <recommendedName>
        <fullName evidence="1">HTH-type transcriptional activator RhaR</fullName>
    </recommendedName>
    <alternativeName>
        <fullName evidence="1">L-rhamnose operon transcriptional activator RhaR</fullName>
    </alternativeName>
</protein>
<comment type="function">
    <text evidence="1">Activates expression of the rhaSR operon in response to L-rhamnose.</text>
</comment>
<comment type="subunit">
    <text evidence="1">Binds DNA as a dimer.</text>
</comment>
<comment type="subcellular location">
    <subcellularLocation>
        <location evidence="1">Cytoplasm</location>
    </subcellularLocation>
</comment>
<proteinExistence type="inferred from homology"/>
<feature type="chain" id="PRO_0000194562" description="HTH-type transcriptional activator RhaR">
    <location>
        <begin position="1"/>
        <end position="290"/>
    </location>
</feature>
<feature type="domain" description="HTH araC/xylS-type" evidence="1">
    <location>
        <begin position="179"/>
        <end position="277"/>
    </location>
</feature>
<feature type="DNA-binding region" description="H-T-H motif" evidence="1">
    <location>
        <begin position="196"/>
        <end position="217"/>
    </location>
</feature>
<feature type="DNA-binding region" description="H-T-H motif" evidence="1">
    <location>
        <begin position="244"/>
        <end position="267"/>
    </location>
</feature>
<feature type="site" description="Interaction with sigma-70" evidence="1">
    <location>
        <position position="246"/>
    </location>
</feature>
<gene>
    <name evidence="1" type="primary">rhaR</name>
    <name type="ordered locus">YPTB0387</name>
</gene>
<name>RHAR_YERPS</name>
<accession>Q66FF1</accession>
<organism>
    <name type="scientific">Yersinia pseudotuberculosis serotype I (strain IP32953)</name>
    <dbReference type="NCBI Taxonomy" id="273123"/>
    <lineage>
        <taxon>Bacteria</taxon>
        <taxon>Pseudomonadati</taxon>
        <taxon>Pseudomonadota</taxon>
        <taxon>Gammaproteobacteria</taxon>
        <taxon>Enterobacterales</taxon>
        <taxon>Yersiniaceae</taxon>
        <taxon>Yersinia</taxon>
    </lineage>
</organism>